<evidence type="ECO:0000250" key="1">
    <source>
        <dbReference type="UniProtKB" id="Q7Y208"/>
    </source>
</evidence>
<evidence type="ECO:0000255" key="2"/>
<evidence type="ECO:0000255" key="3">
    <source>
        <dbReference type="PROSITE-ProRule" id="PRU00159"/>
    </source>
</evidence>
<evidence type="ECO:0000255" key="4">
    <source>
        <dbReference type="PROSITE-ProRule" id="PRU00498"/>
    </source>
</evidence>
<evidence type="ECO:0000269" key="5">
    <source>
    </source>
</evidence>
<evidence type="ECO:0000269" key="6">
    <source>
    </source>
</evidence>
<evidence type="ECO:0000269" key="7">
    <source>
    </source>
</evidence>
<evidence type="ECO:0000269" key="8">
    <source>
    </source>
</evidence>
<evidence type="ECO:0000303" key="9">
    <source>
    </source>
</evidence>
<evidence type="ECO:0000303" key="10">
    <source>
    </source>
</evidence>
<evidence type="ECO:0000303" key="11">
    <source>
    </source>
</evidence>
<evidence type="ECO:0000305" key="12"/>
<evidence type="ECO:0000312" key="13">
    <source>
        <dbReference type="Araport" id="AT1G66980"/>
    </source>
</evidence>
<evidence type="ECO:0000312" key="14">
    <source>
        <dbReference type="EMBL" id="AAF98210.1"/>
    </source>
</evidence>
<evidence type="ECO:0000312" key="15">
    <source>
        <dbReference type="EMBL" id="ADI71282.1"/>
    </source>
</evidence>
<dbReference type="EC" id="3.1.4.46" evidence="1"/>
<dbReference type="EC" id="2.7.11.1"/>
<dbReference type="EMBL" id="HM461758">
    <property type="protein sequence ID" value="ADI71282.1"/>
    <property type="molecule type" value="mRNA"/>
</dbReference>
<dbReference type="EMBL" id="AC007152">
    <property type="protein sequence ID" value="AAF98210.1"/>
    <property type="status" value="ALT_SEQ"/>
    <property type="molecule type" value="Genomic_DNA"/>
</dbReference>
<dbReference type="EMBL" id="CP002684">
    <property type="protein sequence ID" value="AEE34581.1"/>
    <property type="molecule type" value="Genomic_DNA"/>
</dbReference>
<dbReference type="PIR" id="G96693">
    <property type="entry name" value="G96693"/>
</dbReference>
<dbReference type="RefSeq" id="NP_176870.2">
    <molecule id="D7SFH9-1"/>
    <property type="nucleotide sequence ID" value="NM_105369.3"/>
</dbReference>
<dbReference type="SMR" id="D7SFH9"/>
<dbReference type="BioGRID" id="28237">
    <property type="interactions" value="1"/>
</dbReference>
<dbReference type="FunCoup" id="D7SFH9">
    <property type="interactions" value="758"/>
</dbReference>
<dbReference type="STRING" id="3702.D7SFH9"/>
<dbReference type="GlyCosmos" id="D7SFH9">
    <property type="glycosylation" value="13 sites, No reported glycans"/>
</dbReference>
<dbReference type="GlyGen" id="D7SFH9">
    <property type="glycosylation" value="13 sites"/>
</dbReference>
<dbReference type="iPTMnet" id="D7SFH9"/>
<dbReference type="PaxDb" id="3702-AT1G66980.1"/>
<dbReference type="EnsemblPlants" id="AT1G66980.1">
    <molecule id="D7SFH9-1"/>
    <property type="protein sequence ID" value="AT1G66980.1"/>
    <property type="gene ID" value="AT1G66980"/>
</dbReference>
<dbReference type="GeneID" id="843016"/>
<dbReference type="Gramene" id="AT1G66980.1">
    <molecule id="D7SFH9-1"/>
    <property type="protein sequence ID" value="AT1G66980.1"/>
    <property type="gene ID" value="AT1G66980"/>
</dbReference>
<dbReference type="KEGG" id="ath:AT1G66980"/>
<dbReference type="Araport" id="AT1G66980"/>
<dbReference type="TAIR" id="AT1G66980">
    <property type="gene designation" value="SNC4"/>
</dbReference>
<dbReference type="eggNOG" id="KOG1187">
    <property type="taxonomic scope" value="Eukaryota"/>
</dbReference>
<dbReference type="eggNOG" id="KOG2258">
    <property type="taxonomic scope" value="Eukaryota"/>
</dbReference>
<dbReference type="HOGENOM" id="CLU_006333_0_0_1"/>
<dbReference type="InParanoid" id="D7SFH9"/>
<dbReference type="PRO" id="PR:D7SFH9"/>
<dbReference type="Proteomes" id="UP000006548">
    <property type="component" value="Chromosome 1"/>
</dbReference>
<dbReference type="ExpressionAtlas" id="D7SFH9">
    <property type="expression patterns" value="baseline and differential"/>
</dbReference>
<dbReference type="GO" id="GO:0005739">
    <property type="term" value="C:mitochondrion"/>
    <property type="evidence" value="ECO:0007005"/>
    <property type="project" value="TAIR"/>
</dbReference>
<dbReference type="GO" id="GO:0005886">
    <property type="term" value="C:plasma membrane"/>
    <property type="evidence" value="ECO:0007669"/>
    <property type="project" value="UniProtKB-SubCell"/>
</dbReference>
<dbReference type="GO" id="GO:0005524">
    <property type="term" value="F:ATP binding"/>
    <property type="evidence" value="ECO:0007669"/>
    <property type="project" value="UniProtKB-KW"/>
</dbReference>
<dbReference type="GO" id="GO:0008889">
    <property type="term" value="F:glycerophosphodiester phosphodiesterase activity"/>
    <property type="evidence" value="ECO:0007669"/>
    <property type="project" value="UniProtKB-EC"/>
</dbReference>
<dbReference type="GO" id="GO:0106310">
    <property type="term" value="F:protein serine kinase activity"/>
    <property type="evidence" value="ECO:0007669"/>
    <property type="project" value="RHEA"/>
</dbReference>
<dbReference type="GO" id="GO:0004674">
    <property type="term" value="F:protein serine/threonine kinase activity"/>
    <property type="evidence" value="ECO:0007669"/>
    <property type="project" value="UniProtKB-KW"/>
</dbReference>
<dbReference type="GO" id="GO:0006968">
    <property type="term" value="P:cellular defense response"/>
    <property type="evidence" value="ECO:0000314"/>
    <property type="project" value="UniProtKB"/>
</dbReference>
<dbReference type="GO" id="GO:0006952">
    <property type="term" value="P:defense response"/>
    <property type="evidence" value="ECO:0000315"/>
    <property type="project" value="TAIR"/>
</dbReference>
<dbReference type="GO" id="GO:0006071">
    <property type="term" value="P:glycerol metabolic process"/>
    <property type="evidence" value="ECO:0007669"/>
    <property type="project" value="UniProtKB-KW"/>
</dbReference>
<dbReference type="GO" id="GO:0045087">
    <property type="term" value="P:innate immune response"/>
    <property type="evidence" value="ECO:0007669"/>
    <property type="project" value="UniProtKB-KW"/>
</dbReference>
<dbReference type="GO" id="GO:0006629">
    <property type="term" value="P:lipid metabolic process"/>
    <property type="evidence" value="ECO:0007669"/>
    <property type="project" value="InterPro"/>
</dbReference>
<dbReference type="CDD" id="cd08603">
    <property type="entry name" value="GDPD_SHV3_repeat_1"/>
    <property type="match status" value="1"/>
</dbReference>
<dbReference type="CDD" id="cd08604">
    <property type="entry name" value="GDPD_SHV3_repeat_2"/>
    <property type="match status" value="1"/>
</dbReference>
<dbReference type="CDD" id="cd14066">
    <property type="entry name" value="STKc_IRAK"/>
    <property type="match status" value="1"/>
</dbReference>
<dbReference type="FunFam" id="3.20.20.190:FF:000011">
    <property type="entry name" value="Glycerophosphodiester phosphodiesterase GDPDL3"/>
    <property type="match status" value="1"/>
</dbReference>
<dbReference type="FunFam" id="3.20.20.190:FF:000013">
    <property type="entry name" value="Glycerophosphodiester phosphodiesterase GDPDL3"/>
    <property type="match status" value="1"/>
</dbReference>
<dbReference type="FunFam" id="1.10.510.10:FF:000590">
    <property type="entry name" value="PR5-like receptor kinase"/>
    <property type="match status" value="1"/>
</dbReference>
<dbReference type="FunFam" id="3.30.200.20:FF:000644">
    <property type="entry name" value="Suppressor of npr1-1 constitutive 4"/>
    <property type="match status" value="1"/>
</dbReference>
<dbReference type="Gene3D" id="3.20.20.190">
    <property type="entry name" value="Phosphatidylinositol (PI) phosphodiesterase"/>
    <property type="match status" value="2"/>
</dbReference>
<dbReference type="Gene3D" id="3.30.200.20">
    <property type="entry name" value="Phosphorylase Kinase, domain 1"/>
    <property type="match status" value="1"/>
</dbReference>
<dbReference type="Gene3D" id="1.10.510.10">
    <property type="entry name" value="Transferase(Phosphotransferase) domain 1"/>
    <property type="match status" value="1"/>
</dbReference>
<dbReference type="InterPro" id="IPR030395">
    <property type="entry name" value="GP_PDE_dom"/>
</dbReference>
<dbReference type="InterPro" id="IPR011009">
    <property type="entry name" value="Kinase-like_dom_sf"/>
</dbReference>
<dbReference type="InterPro" id="IPR017946">
    <property type="entry name" value="PLC-like_Pdiesterase_TIM-brl"/>
</dbReference>
<dbReference type="InterPro" id="IPR000719">
    <property type="entry name" value="Prot_kinase_dom"/>
</dbReference>
<dbReference type="InterPro" id="IPR017441">
    <property type="entry name" value="Protein_kinase_ATP_BS"/>
</dbReference>
<dbReference type="InterPro" id="IPR001245">
    <property type="entry name" value="Ser-Thr/Tyr_kinase_cat_dom"/>
</dbReference>
<dbReference type="InterPro" id="IPR008271">
    <property type="entry name" value="Ser/Thr_kinase_AS"/>
</dbReference>
<dbReference type="PANTHER" id="PTHR43620:SF39">
    <property type="entry name" value="GLYCEROPHOSPHODIESTER PHOSPHODIESTERASE GDPDL1-RELATED"/>
    <property type="match status" value="1"/>
</dbReference>
<dbReference type="PANTHER" id="PTHR43620">
    <property type="entry name" value="GLYCEROPHOSPHORYL DIESTER PHOSPHODIESTERASE"/>
    <property type="match status" value="1"/>
</dbReference>
<dbReference type="Pfam" id="PF03009">
    <property type="entry name" value="GDPD"/>
    <property type="match status" value="2"/>
</dbReference>
<dbReference type="Pfam" id="PF07714">
    <property type="entry name" value="PK_Tyr_Ser-Thr"/>
    <property type="match status" value="1"/>
</dbReference>
<dbReference type="SMART" id="SM00220">
    <property type="entry name" value="S_TKc"/>
    <property type="match status" value="1"/>
</dbReference>
<dbReference type="SUPFAM" id="SSF51695">
    <property type="entry name" value="PLC-like phosphodiesterases"/>
    <property type="match status" value="2"/>
</dbReference>
<dbReference type="SUPFAM" id="SSF56112">
    <property type="entry name" value="Protein kinase-like (PK-like)"/>
    <property type="match status" value="1"/>
</dbReference>
<dbReference type="PROSITE" id="PS51704">
    <property type="entry name" value="GP_PDE"/>
    <property type="match status" value="2"/>
</dbReference>
<dbReference type="PROSITE" id="PS00107">
    <property type="entry name" value="PROTEIN_KINASE_ATP"/>
    <property type="match status" value="1"/>
</dbReference>
<dbReference type="PROSITE" id="PS50011">
    <property type="entry name" value="PROTEIN_KINASE_DOM"/>
    <property type="match status" value="1"/>
</dbReference>
<dbReference type="PROSITE" id="PS00108">
    <property type="entry name" value="PROTEIN_KINASE_ST"/>
    <property type="match status" value="1"/>
</dbReference>
<proteinExistence type="evidence at protein level"/>
<gene>
    <name evidence="9" type="primary">LRK10L-2.6</name>
    <name evidence="11" type="synonym">GDPDL2</name>
    <name evidence="10" type="synonym">SNC4</name>
    <name evidence="13" type="ordered locus">At1g66980</name>
    <name evidence="14" type="ORF">F1O19.6</name>
</gene>
<organism evidence="15">
    <name type="scientific">Arabidopsis thaliana</name>
    <name type="common">Mouse-ear cress</name>
    <dbReference type="NCBI Taxonomy" id="3702"/>
    <lineage>
        <taxon>Eukaryota</taxon>
        <taxon>Viridiplantae</taxon>
        <taxon>Streptophyta</taxon>
        <taxon>Embryophyta</taxon>
        <taxon>Tracheophyta</taxon>
        <taxon>Spermatophyta</taxon>
        <taxon>Magnoliopsida</taxon>
        <taxon>eudicotyledons</taxon>
        <taxon>Gunneridae</taxon>
        <taxon>Pentapetalae</taxon>
        <taxon>rosids</taxon>
        <taxon>malvids</taxon>
        <taxon>Brassicales</taxon>
        <taxon>Brassicaceae</taxon>
        <taxon>Camelineae</taxon>
        <taxon>Arabidopsis</taxon>
    </lineage>
</organism>
<name>LRL26_ARATH</name>
<protein>
    <recommendedName>
        <fullName evidence="10">Protein SUPPRESSOR OF NPR1-1 CONSTITUTIVE 4</fullName>
    </recommendedName>
    <domain>
        <recommendedName>
            <fullName evidence="12">Glycerophosphodiester phosphodiesterase protein kinase domain-containing GDPDL2</fullName>
            <ecNumber evidence="1">3.1.4.46</ecNumber>
        </recommendedName>
        <alternativeName>
            <fullName evidence="11">Glycerophosphodiester phosphodiesterase-like 2</fullName>
            <shortName evidence="11">ATGDPDL2</shortName>
        </alternativeName>
    </domain>
    <domain>
        <recommendedName>
            <fullName evidence="9">LEAF RUST 10 DISEASE-RESISTANCE LOCUS RECEPTOR-LIKE PROTEIN KINASE-like 2.6</fullName>
            <ecNumber>2.7.11.1</ecNumber>
        </recommendedName>
        <alternativeName>
            <fullName evidence="12">Probable receptor-like serine/threonine-protein kinase LRK10L-2.6</fullName>
        </alternativeName>
    </domain>
</protein>
<accession>D7SFH9</accession>
<accession>Q9FZI0</accession>
<feature type="signal peptide" evidence="2">
    <location>
        <begin position="1"/>
        <end position="35"/>
    </location>
</feature>
<feature type="chain" id="PRO_0000430614" description="Protein SUPPRESSOR OF NPR1-1 CONSTITUTIVE 4" evidence="2">
    <location>
        <begin position="36"/>
        <end position="1118"/>
    </location>
</feature>
<feature type="topological domain" description="Extracellular" evidence="2">
    <location>
        <begin position="36"/>
        <end position="751"/>
    </location>
</feature>
<feature type="transmembrane region" description="Helical" evidence="2">
    <location>
        <begin position="752"/>
        <end position="772"/>
    </location>
</feature>
<feature type="topological domain" description="Cytoplasmic" evidence="2">
    <location>
        <begin position="773"/>
        <end position="1118"/>
    </location>
</feature>
<feature type="domain" description="GP-PDE 1" evidence="2">
    <location>
        <begin position="51"/>
        <end position="353"/>
    </location>
</feature>
<feature type="domain" description="GP-PDE 2" evidence="2">
    <location>
        <begin position="369"/>
        <end position="670"/>
    </location>
</feature>
<feature type="domain" description="Protein kinase" evidence="3">
    <location>
        <begin position="805"/>
        <end position="1094"/>
    </location>
</feature>
<feature type="active site" description="Proton acceptor" evidence="3">
    <location>
        <position position="928"/>
    </location>
</feature>
<feature type="binding site" evidence="3">
    <location>
        <begin position="811"/>
        <end position="819"/>
    </location>
    <ligand>
        <name>ATP</name>
        <dbReference type="ChEBI" id="CHEBI:30616"/>
    </ligand>
</feature>
<feature type="binding site" evidence="3">
    <location>
        <position position="833"/>
    </location>
    <ligand>
        <name>ATP</name>
        <dbReference type="ChEBI" id="CHEBI:30616"/>
    </ligand>
</feature>
<feature type="glycosylation site" description="N-linked (GlcNAc...) asparagine" evidence="4">
    <location>
        <position position="106"/>
    </location>
</feature>
<feature type="glycosylation site" description="N-linked (GlcNAc...) asparagine" evidence="4">
    <location>
        <position position="195"/>
    </location>
</feature>
<feature type="glycosylation site" description="N-linked (GlcNAc...) asparagine" evidence="4">
    <location>
        <position position="251"/>
    </location>
</feature>
<feature type="glycosylation site" description="N-linked (GlcNAc...) asparagine" evidence="4">
    <location>
        <position position="260"/>
    </location>
</feature>
<feature type="glycosylation site" description="N-linked (GlcNAc...) asparagine" evidence="4">
    <location>
        <position position="318"/>
    </location>
</feature>
<feature type="glycosylation site" description="N-linked (GlcNAc...) asparagine" evidence="4">
    <location>
        <position position="335"/>
    </location>
</feature>
<feature type="glycosylation site" description="N-linked (GlcNAc...) asparagine" evidence="4">
    <location>
        <position position="362"/>
    </location>
</feature>
<feature type="glycosylation site" description="N-linked (GlcNAc...) asparagine" evidence="4">
    <location>
        <position position="422"/>
    </location>
</feature>
<feature type="glycosylation site" description="N-linked (GlcNAc...) asparagine" evidence="4">
    <location>
        <position position="433"/>
    </location>
</feature>
<feature type="glycosylation site" description="N-linked (GlcNAc...) asparagine" evidence="4">
    <location>
        <position position="497"/>
    </location>
</feature>
<feature type="glycosylation site" description="N-linked (GlcNAc...) asparagine" evidence="4">
    <location>
        <position position="557"/>
    </location>
</feature>
<feature type="glycosylation site" description="N-linked (GlcNAc...) asparagine" evidence="4">
    <location>
        <position position="573"/>
    </location>
</feature>
<feature type="glycosylation site" description="N-linked (GlcNAc...) asparagine" evidence="4">
    <location>
        <position position="656"/>
    </location>
</feature>
<feature type="mutagenesis site" description="In snc4-1D; dwarf phenotype, constitutive expression of defense genes and enhanced disease resistance.">
    <original>A</original>
    <variation>T</variation>
    <location>
        <position position="850"/>
    </location>
</feature>
<sequence>MNSQQSTRTKQMLQQSSTHLLCGVVLLQLFAAQVDAQRSTSPWQTLSGDAPLVIARGGFSGLFPDSSLAAYQFAMVVSVADVVLWCDVQLTKDGHGICFPDLNLANASNSEEVYPNRQKSYPVNGVTTKGWFPIDFSLTELQKVLFSLIRGILSRSGKFDENGYSISTVQNVATQMKPALFWLNVQHDEFYEQHNLSMSSFLLSTSRTVSIDFISSPEVNFFRKIAGGFGNNGPSFVFQFMGKEDFEPTTNRTYGSILSNLSFVKTFASGILVPKSYILPLDDKQYLLPHTSLVQDAHKAGLKLYASGFANDVDIAYNYSWDPVSEYLSFVDNGNFSVDGMLSDFPLTASASVDCFSHIGRNATKQVDFLVISKNGASGEYPGCTKLAYEKAIKDGSDVIDCPVQMSSDGIPFCSSSIDLVNSTTVGQTHLRNRSIIVPEISSVAGIFTFSLTWHEIQSLTPAISNPFRENGMSRNPNERNSGNLISLYEFLNLAKNSTSLSGILISLENVVYLREKKGLDVVKVVLNRLTETGYIVGTLKVMIQSTTRLVLVDFKNQSTYKTVYKIKETIGNITDSAIEDIKKFANAVVINKASVFPNSDSFLTGQTTNVLERLQKFQLPVYVELFQNEFVSQPFDFFADETVEINAYIFGAGINGTITEFPYTAARYKRNRCLGREEVPPYMLPVNPGGVLTLISTSSLPPAQDPNPIFTHDDVTEPPLPPVIAKSPTSTLGTPSTIAKPLRNFLKVIRIVSWSVAGVVLFLVLLTLVFCFHRKRETRLRQQKLKALIPLEHYTYAQVKRITKSFAEVVGRGGFGIVYKGTLSDGRVVAVKVLKDTKGNGEDFINEVATMSRTSHLNIVSLLGFCSEGSKRAIIYEFLENGSLDKFILGKTSVNMDWTALYRIALGVAHGLEYLHHSCKTRIVHFDIKPQNVLLDDSFCPKVSDFGLAKLCEKKESILSMLDTRGTIGYIAPEMISRVYGNVSHKSDVYSYGMLVLEIIGARNKEKANQACASNTSSMYFPEWVYRDLESCKSGRHIEDGINSEEDELAKKMTLVGLWCIQPSPVDRPAMNRVVEMMEGSLEALEVPPRPVLQQIPISNLHESSILSEDVSVYTEG</sequence>
<comment type="function">
    <text evidence="6">Atypical receptor-like kinase involved in disease resistance.</text>
</comment>
<comment type="catalytic activity">
    <reaction evidence="1">
        <text>a sn-glycero-3-phosphodiester + H2O = an alcohol + sn-glycerol 3-phosphate + H(+)</text>
        <dbReference type="Rhea" id="RHEA:12969"/>
        <dbReference type="ChEBI" id="CHEBI:15377"/>
        <dbReference type="ChEBI" id="CHEBI:15378"/>
        <dbReference type="ChEBI" id="CHEBI:30879"/>
        <dbReference type="ChEBI" id="CHEBI:57597"/>
        <dbReference type="ChEBI" id="CHEBI:83408"/>
        <dbReference type="EC" id="3.1.4.46"/>
    </reaction>
</comment>
<comment type="catalytic activity">
    <reaction>
        <text>L-seryl-[protein] + ATP = O-phospho-L-seryl-[protein] + ADP + H(+)</text>
        <dbReference type="Rhea" id="RHEA:17989"/>
        <dbReference type="Rhea" id="RHEA-COMP:9863"/>
        <dbReference type="Rhea" id="RHEA-COMP:11604"/>
        <dbReference type="ChEBI" id="CHEBI:15378"/>
        <dbReference type="ChEBI" id="CHEBI:29999"/>
        <dbReference type="ChEBI" id="CHEBI:30616"/>
        <dbReference type="ChEBI" id="CHEBI:83421"/>
        <dbReference type="ChEBI" id="CHEBI:456216"/>
        <dbReference type="EC" id="2.7.11.1"/>
    </reaction>
</comment>
<comment type="catalytic activity">
    <reaction>
        <text>L-threonyl-[protein] + ATP = O-phospho-L-threonyl-[protein] + ADP + H(+)</text>
        <dbReference type="Rhea" id="RHEA:46608"/>
        <dbReference type="Rhea" id="RHEA-COMP:11060"/>
        <dbReference type="Rhea" id="RHEA-COMP:11605"/>
        <dbReference type="ChEBI" id="CHEBI:15378"/>
        <dbReference type="ChEBI" id="CHEBI:30013"/>
        <dbReference type="ChEBI" id="CHEBI:30616"/>
        <dbReference type="ChEBI" id="CHEBI:61977"/>
        <dbReference type="ChEBI" id="CHEBI:456216"/>
        <dbReference type="EC" id="2.7.11.1"/>
    </reaction>
</comment>
<comment type="subcellular location">
    <subcellularLocation>
        <location evidence="6">Cell membrane</location>
        <topology evidence="12">Single-pass type I membrane protein</topology>
    </subcellularLocation>
</comment>
<comment type="alternative products">
    <event type="alternative splicing"/>
    <isoform>
        <id>D7SFH9-1</id>
        <name>1</name>
        <sequence type="displayed"/>
    </isoform>
    <text evidence="8">A number of isoforms are produced. Splicing is regulated by SUA and DRT111.</text>
</comment>
<comment type="tissue specificity">
    <text evidence="7">Expressed in shoots, rosette and cauline leaves, stems, flowers and siliques.</text>
</comment>
<comment type="domain">
    <text evidence="10">The two glycerophosphodiester phosphodiesterase domains are predicted to be extracellular and the kinase domain cytoplasmic.</text>
</comment>
<comment type="disruption phenotype">
    <text evidence="5 6">No visible phenotype under normal growth conditions.</text>
</comment>
<comment type="miscellaneous">
    <text evidence="6">Gain-of-function mutant plants snc4-1D show a dwarf phenotype, express constitutively the defense marker genes PR1, PR2, and PDF1.2, and display enhanced resistance to Hyaloperonospora arabidopsidis isolate NOCO2.</text>
</comment>
<comment type="similarity">
    <text evidence="12">In the N-terminal section; belongs to the glycerophosphoryl diester phosphodiesterase family.</text>
</comment>
<comment type="similarity">
    <text evidence="3">In the C-terminal section; belongs to the protein kinase superfamily. Ser/Thr protein kinase family.</text>
</comment>
<comment type="sequence caution">
    <conflict type="erroneous gene model prediction">
        <sequence resource="EMBL-CDS" id="AAF98210"/>
    </conflict>
</comment>
<reference key="1">
    <citation type="journal article" date="2010" name="Plant Physiol.">
        <title>Activation of plant immune responses by a gain-of-function mutation in an atypical receptor-like kinase.</title>
        <authorList>
            <person name="Bi D."/>
            <person name="Cheng Y.T."/>
            <person name="Li X."/>
            <person name="Zhang Y."/>
        </authorList>
    </citation>
    <scope>NUCLEOTIDE SEQUENCE [MRNA]</scope>
    <scope>FUNCTION</scope>
    <scope>SUBCELLULAR LOCATION</scope>
    <scope>DISRUPTION PHENOTYPE</scope>
    <scope>MUTAGENESIS OF ALA-850</scope>
</reference>
<reference key="2">
    <citation type="journal article" date="2000" name="Nature">
        <title>Sequence and analysis of chromosome 1 of the plant Arabidopsis thaliana.</title>
        <authorList>
            <person name="Theologis A."/>
            <person name="Ecker J.R."/>
            <person name="Palm C.J."/>
            <person name="Federspiel N.A."/>
            <person name="Kaul S."/>
            <person name="White O."/>
            <person name="Alonso J."/>
            <person name="Altafi H."/>
            <person name="Araujo R."/>
            <person name="Bowman C.L."/>
            <person name="Brooks S.Y."/>
            <person name="Buehler E."/>
            <person name="Chan A."/>
            <person name="Chao Q."/>
            <person name="Chen H."/>
            <person name="Cheuk R.F."/>
            <person name="Chin C.W."/>
            <person name="Chung M.K."/>
            <person name="Conn L."/>
            <person name="Conway A.B."/>
            <person name="Conway A.R."/>
            <person name="Creasy T.H."/>
            <person name="Dewar K."/>
            <person name="Dunn P."/>
            <person name="Etgu P."/>
            <person name="Feldblyum T.V."/>
            <person name="Feng J.-D."/>
            <person name="Fong B."/>
            <person name="Fujii C.Y."/>
            <person name="Gill J.E."/>
            <person name="Goldsmith A.D."/>
            <person name="Haas B."/>
            <person name="Hansen N.F."/>
            <person name="Hughes B."/>
            <person name="Huizar L."/>
            <person name="Hunter J.L."/>
            <person name="Jenkins J."/>
            <person name="Johnson-Hopson C."/>
            <person name="Khan S."/>
            <person name="Khaykin E."/>
            <person name="Kim C.J."/>
            <person name="Koo H.L."/>
            <person name="Kremenetskaia I."/>
            <person name="Kurtz D.B."/>
            <person name="Kwan A."/>
            <person name="Lam B."/>
            <person name="Langin-Hooper S."/>
            <person name="Lee A."/>
            <person name="Lee J.M."/>
            <person name="Lenz C.A."/>
            <person name="Li J.H."/>
            <person name="Li Y.-P."/>
            <person name="Lin X."/>
            <person name="Liu S.X."/>
            <person name="Liu Z.A."/>
            <person name="Luros J.S."/>
            <person name="Maiti R."/>
            <person name="Marziali A."/>
            <person name="Militscher J."/>
            <person name="Miranda M."/>
            <person name="Nguyen M."/>
            <person name="Nierman W.C."/>
            <person name="Osborne B.I."/>
            <person name="Pai G."/>
            <person name="Peterson J."/>
            <person name="Pham P.K."/>
            <person name="Rizzo M."/>
            <person name="Rooney T."/>
            <person name="Rowley D."/>
            <person name="Sakano H."/>
            <person name="Salzberg S.L."/>
            <person name="Schwartz J.R."/>
            <person name="Shinn P."/>
            <person name="Southwick A.M."/>
            <person name="Sun H."/>
            <person name="Tallon L.J."/>
            <person name="Tambunga G."/>
            <person name="Toriumi M.J."/>
            <person name="Town C.D."/>
            <person name="Utterback T."/>
            <person name="Van Aken S."/>
            <person name="Vaysberg M."/>
            <person name="Vysotskaia V.S."/>
            <person name="Walker M."/>
            <person name="Wu D."/>
            <person name="Yu G."/>
            <person name="Fraser C.M."/>
            <person name="Venter J.C."/>
            <person name="Davis R.W."/>
        </authorList>
    </citation>
    <scope>NUCLEOTIDE SEQUENCE [LARGE SCALE GENOMIC DNA]</scope>
    <source>
        <strain>cv. Columbia</strain>
    </source>
</reference>
<reference key="3">
    <citation type="journal article" date="2017" name="Plant J.">
        <title>Araport11: a complete reannotation of the Arabidopsis thaliana reference genome.</title>
        <authorList>
            <person name="Cheng C.Y."/>
            <person name="Krishnakumar V."/>
            <person name="Chan A.P."/>
            <person name="Thibaud-Nissen F."/>
            <person name="Schobel S."/>
            <person name="Town C.D."/>
        </authorList>
    </citation>
    <scope>GENOME REANNOTATION</scope>
    <source>
        <strain>cv. Columbia</strain>
    </source>
</reference>
<reference key="4">
    <citation type="journal article" date="2001" name="Proc. Natl. Acad. Sci. U.S.A.">
        <title>Receptor-like kinases from Arabidopsis form a monophyletic gene family related to animal receptor kinases.</title>
        <authorList>
            <person name="Shiu S.H."/>
            <person name="Bleecker A.B."/>
        </authorList>
    </citation>
    <scope>GENE FAMILY</scope>
</reference>
<reference key="5">
    <citation type="journal article" date="2003" name="Plant Physiol.">
        <title>Expansion of the receptor-like kinase/Pelle gene family and receptor-like proteins in Arabidopsis.</title>
        <authorList>
            <person name="Shiu S.H."/>
            <person name="Bleecker A.B."/>
        </authorList>
    </citation>
    <scope>GENE FAMILY</scope>
</reference>
<reference key="6">
    <citation type="journal article" date="2008" name="Plant Cell Physiol.">
        <title>The glycerophosphoryl diester phosphodiesterase-like proteins SHV3 and its homologs play important roles in cell wall organization.</title>
        <authorList>
            <person name="Hayashi S."/>
            <person name="Ishii T."/>
            <person name="Matsunaga T."/>
            <person name="Tominaga R."/>
            <person name="Kuromori T."/>
            <person name="Wada T."/>
            <person name="Shinozaki K."/>
            <person name="Hirayama T."/>
        </authorList>
    </citation>
    <scope>DISRUPTION PHENOTYPE</scope>
</reference>
<reference key="7">
    <citation type="journal article" date="2011" name="Plant J.">
        <title>Characterization of the Arabidopsis glycerophosphodiester phosphodiesterase (GDPD) family reveals a role of the plastid-localized AtGDPD1 in maintaining cellular phosphate homeostasis under phosphate starvation.</title>
        <authorList>
            <person name="Cheng Y."/>
            <person name="Zhou W."/>
            <person name="El Sheery N.I."/>
            <person name="Peters C."/>
            <person name="Li M."/>
            <person name="Wang X."/>
            <person name="Huang J."/>
        </authorList>
    </citation>
    <scope>TISSUE SPECIFICITY</scope>
    <scope>GENE FAMILY</scope>
    <scope>NOMENCLATURE</scope>
</reference>
<reference key="8">
    <citation type="journal article" date="2014" name="Mol. Plant">
        <title>Splicing of receptor-like kinase-encoding SNC4 and CERK1 is regulated by two conserved splicing factors that are required for plant immunity.</title>
        <authorList>
            <person name="Zhang Z."/>
            <person name="Liu Y."/>
            <person name="Ding P."/>
            <person name="Li Y."/>
            <person name="Kong Q."/>
            <person name="Zhang Y."/>
        </authorList>
    </citation>
    <scope>ALTERNATIVE SPLICING</scope>
</reference>
<keyword id="KW-0025">Alternative splicing</keyword>
<keyword id="KW-0067">ATP-binding</keyword>
<keyword id="KW-1003">Cell membrane</keyword>
<keyword id="KW-0319">Glycerol metabolism</keyword>
<keyword id="KW-0325">Glycoprotein</keyword>
<keyword id="KW-0378">Hydrolase</keyword>
<keyword id="KW-0391">Immunity</keyword>
<keyword id="KW-0399">Innate immunity</keyword>
<keyword id="KW-0418">Kinase</keyword>
<keyword id="KW-0472">Membrane</keyword>
<keyword id="KW-0547">Nucleotide-binding</keyword>
<keyword id="KW-0611">Plant defense</keyword>
<keyword id="KW-0675">Receptor</keyword>
<keyword id="KW-1185">Reference proteome</keyword>
<keyword id="KW-0723">Serine/threonine-protein kinase</keyword>
<keyword id="KW-0732">Signal</keyword>
<keyword id="KW-0808">Transferase</keyword>
<keyword id="KW-0812">Transmembrane</keyword>
<keyword id="KW-1133">Transmembrane helix</keyword>